<organism>
    <name type="scientific">Hamiltonella defensa subsp. Acyrthosiphon pisum (strain 5AT)</name>
    <dbReference type="NCBI Taxonomy" id="572265"/>
    <lineage>
        <taxon>Bacteria</taxon>
        <taxon>Pseudomonadati</taxon>
        <taxon>Pseudomonadota</taxon>
        <taxon>Gammaproteobacteria</taxon>
        <taxon>Enterobacterales</taxon>
        <taxon>Enterobacteriaceae</taxon>
        <taxon>aphid secondary symbionts</taxon>
        <taxon>Candidatus Hamiltonella</taxon>
    </lineage>
</organism>
<proteinExistence type="inferred from homology"/>
<name>HLDD_HAMD5</name>
<gene>
    <name evidence="1" type="primary">hldD</name>
    <name type="ordered locus">HDEF_0048</name>
</gene>
<comment type="function">
    <text evidence="1">Catalyzes the interconversion between ADP-D-glycero-beta-D-manno-heptose and ADP-L-glycero-beta-D-manno-heptose via an epimerization at carbon 6 of the heptose.</text>
</comment>
<comment type="catalytic activity">
    <reaction evidence="1">
        <text>ADP-D-glycero-beta-D-manno-heptose = ADP-L-glycero-beta-D-manno-heptose</text>
        <dbReference type="Rhea" id="RHEA:17577"/>
        <dbReference type="ChEBI" id="CHEBI:59967"/>
        <dbReference type="ChEBI" id="CHEBI:61506"/>
        <dbReference type="EC" id="5.1.3.20"/>
    </reaction>
</comment>
<comment type="cofactor">
    <cofactor evidence="1">
        <name>NADP(+)</name>
        <dbReference type="ChEBI" id="CHEBI:58349"/>
    </cofactor>
    <text evidence="1">Binds 1 NADP(+) per subunit.</text>
</comment>
<comment type="pathway">
    <text evidence="1">Nucleotide-sugar biosynthesis; ADP-L-glycero-beta-D-manno-heptose biosynthesis; ADP-L-glycero-beta-D-manno-heptose from D-glycero-beta-D-manno-heptose 7-phosphate: step 4/4.</text>
</comment>
<comment type="subunit">
    <text evidence="1">Homopentamer.</text>
</comment>
<comment type="domain">
    <text evidence="1">Contains a large N-terminal NADP-binding domain, and a smaller C-terminal substrate-binding domain.</text>
</comment>
<comment type="similarity">
    <text evidence="1">Belongs to the NAD(P)-dependent epimerase/dehydratase family. HldD subfamily.</text>
</comment>
<accession>C4K8I6</accession>
<sequence>MIIVTGGAGFIGSNIVRALNKIGYQDILVVDNLEKGAKFVNLVDLKIADYRDKDDFITSVRAKEVLGNIEAIFHLGACSSTMEWDGQFMMKNNYEYSKTLLHFCLKACIPFLYASSAAVYGGRTDCFIEEPQYEKPLNIYGYSKFLFDQYVRKIWPKARAPICGFRYFNVYGPRETHKGSMASVVFHLDKQIKAGKPPQLFLGSEQFKRDFIFVDDVAQINLWCWQNQISGIFNCGTGHAASFQTLADTVVAYHNSKPVQYVDFPENLKGCYQTFTQADITKLRTIGYDKPFKPLDEGVTHYLDWLNHQ</sequence>
<keyword id="KW-0119">Carbohydrate metabolism</keyword>
<keyword id="KW-0413">Isomerase</keyword>
<keyword id="KW-0521">NADP</keyword>
<evidence type="ECO:0000255" key="1">
    <source>
        <dbReference type="HAMAP-Rule" id="MF_01601"/>
    </source>
</evidence>
<reference key="1">
    <citation type="journal article" date="2009" name="Proc. Natl. Acad. Sci. U.S.A.">
        <title>Hamiltonella defensa, genome evolution of protective bacterial endosymbiont from pathogenic ancestors.</title>
        <authorList>
            <person name="Degnan P.H."/>
            <person name="Yu Y."/>
            <person name="Sisneros N."/>
            <person name="Wing R.A."/>
            <person name="Moran N.A."/>
        </authorList>
    </citation>
    <scope>NUCLEOTIDE SEQUENCE [LARGE SCALE GENOMIC DNA]</scope>
    <source>
        <strain>5AT</strain>
    </source>
</reference>
<feature type="chain" id="PRO_1000215687" description="ADP-L-glycero-D-manno-heptose-6-epimerase">
    <location>
        <begin position="1"/>
        <end position="309"/>
    </location>
</feature>
<feature type="active site" description="Proton acceptor" evidence="1">
    <location>
        <position position="140"/>
    </location>
</feature>
<feature type="active site" description="Proton acceptor" evidence="1">
    <location>
        <position position="178"/>
    </location>
</feature>
<feature type="binding site" evidence="1">
    <location>
        <begin position="10"/>
        <end position="11"/>
    </location>
    <ligand>
        <name>NADP(+)</name>
        <dbReference type="ChEBI" id="CHEBI:58349"/>
    </ligand>
</feature>
<feature type="binding site" evidence="1">
    <location>
        <begin position="31"/>
        <end position="32"/>
    </location>
    <ligand>
        <name>NADP(+)</name>
        <dbReference type="ChEBI" id="CHEBI:58349"/>
    </ligand>
</feature>
<feature type="binding site" evidence="1">
    <location>
        <position position="38"/>
    </location>
    <ligand>
        <name>NADP(+)</name>
        <dbReference type="ChEBI" id="CHEBI:58349"/>
    </ligand>
</feature>
<feature type="binding site" evidence="1">
    <location>
        <position position="53"/>
    </location>
    <ligand>
        <name>NADP(+)</name>
        <dbReference type="ChEBI" id="CHEBI:58349"/>
    </ligand>
</feature>
<feature type="binding site" evidence="1">
    <location>
        <begin position="75"/>
        <end position="79"/>
    </location>
    <ligand>
        <name>NADP(+)</name>
        <dbReference type="ChEBI" id="CHEBI:58349"/>
    </ligand>
</feature>
<feature type="binding site" evidence="1">
    <location>
        <position position="92"/>
    </location>
    <ligand>
        <name>NADP(+)</name>
        <dbReference type="ChEBI" id="CHEBI:58349"/>
    </ligand>
</feature>
<feature type="binding site" evidence="1">
    <location>
        <position position="144"/>
    </location>
    <ligand>
        <name>NADP(+)</name>
        <dbReference type="ChEBI" id="CHEBI:58349"/>
    </ligand>
</feature>
<feature type="binding site" evidence="1">
    <location>
        <position position="169"/>
    </location>
    <ligand>
        <name>substrate</name>
    </ligand>
</feature>
<feature type="binding site" evidence="1">
    <location>
        <position position="170"/>
    </location>
    <ligand>
        <name>NADP(+)</name>
        <dbReference type="ChEBI" id="CHEBI:58349"/>
    </ligand>
</feature>
<feature type="binding site" evidence="1">
    <location>
        <position position="178"/>
    </location>
    <ligand>
        <name>NADP(+)</name>
        <dbReference type="ChEBI" id="CHEBI:58349"/>
    </ligand>
</feature>
<feature type="binding site" evidence="1">
    <location>
        <position position="180"/>
    </location>
    <ligand>
        <name>substrate</name>
    </ligand>
</feature>
<feature type="binding site" evidence="1">
    <location>
        <position position="187"/>
    </location>
    <ligand>
        <name>substrate</name>
    </ligand>
</feature>
<feature type="binding site" evidence="1">
    <location>
        <begin position="201"/>
        <end position="204"/>
    </location>
    <ligand>
        <name>substrate</name>
    </ligand>
</feature>
<feature type="binding site" evidence="1">
    <location>
        <position position="209"/>
    </location>
    <ligand>
        <name>substrate</name>
    </ligand>
</feature>
<feature type="binding site" evidence="1">
    <location>
        <position position="272"/>
    </location>
    <ligand>
        <name>substrate</name>
    </ligand>
</feature>
<protein>
    <recommendedName>
        <fullName evidence="1">ADP-L-glycero-D-manno-heptose-6-epimerase</fullName>
        <ecNumber evidence="1">5.1.3.20</ecNumber>
    </recommendedName>
    <alternativeName>
        <fullName evidence="1">ADP-L-glycero-beta-D-manno-heptose-6-epimerase</fullName>
        <shortName evidence="1">ADP-glyceromanno-heptose 6-epimerase</shortName>
        <shortName evidence="1">ADP-hep 6-epimerase</shortName>
        <shortName evidence="1">AGME</shortName>
    </alternativeName>
</protein>
<dbReference type="EC" id="5.1.3.20" evidence="1"/>
<dbReference type="EMBL" id="CP001277">
    <property type="protein sequence ID" value="ACQ66823.1"/>
    <property type="molecule type" value="Genomic_DNA"/>
</dbReference>
<dbReference type="RefSeq" id="WP_012737788.1">
    <property type="nucleotide sequence ID" value="NC_012751.1"/>
</dbReference>
<dbReference type="SMR" id="C4K8I6"/>
<dbReference type="STRING" id="572265.HDEF_0048"/>
<dbReference type="GeneID" id="66259990"/>
<dbReference type="KEGG" id="hde:HDEF_0048"/>
<dbReference type="eggNOG" id="COG0451">
    <property type="taxonomic scope" value="Bacteria"/>
</dbReference>
<dbReference type="HOGENOM" id="CLU_007383_1_3_6"/>
<dbReference type="UniPathway" id="UPA00356">
    <property type="reaction ID" value="UER00440"/>
</dbReference>
<dbReference type="Proteomes" id="UP000002334">
    <property type="component" value="Chromosome"/>
</dbReference>
<dbReference type="GO" id="GO:0008712">
    <property type="term" value="F:ADP-glyceromanno-heptose 6-epimerase activity"/>
    <property type="evidence" value="ECO:0007669"/>
    <property type="project" value="UniProtKB-UniRule"/>
</dbReference>
<dbReference type="GO" id="GO:0050661">
    <property type="term" value="F:NADP binding"/>
    <property type="evidence" value="ECO:0007669"/>
    <property type="project" value="InterPro"/>
</dbReference>
<dbReference type="GO" id="GO:0097171">
    <property type="term" value="P:ADP-L-glycero-beta-D-manno-heptose biosynthetic process"/>
    <property type="evidence" value="ECO:0007669"/>
    <property type="project" value="UniProtKB-UniPathway"/>
</dbReference>
<dbReference type="GO" id="GO:0005975">
    <property type="term" value="P:carbohydrate metabolic process"/>
    <property type="evidence" value="ECO:0007669"/>
    <property type="project" value="UniProtKB-UniRule"/>
</dbReference>
<dbReference type="CDD" id="cd05248">
    <property type="entry name" value="ADP_GME_SDR_e"/>
    <property type="match status" value="1"/>
</dbReference>
<dbReference type="Gene3D" id="3.40.50.720">
    <property type="entry name" value="NAD(P)-binding Rossmann-like Domain"/>
    <property type="match status" value="1"/>
</dbReference>
<dbReference type="Gene3D" id="3.90.25.10">
    <property type="entry name" value="UDP-galactose 4-epimerase, domain 1"/>
    <property type="match status" value="1"/>
</dbReference>
<dbReference type="HAMAP" id="MF_01601">
    <property type="entry name" value="Heptose_epimerase"/>
    <property type="match status" value="1"/>
</dbReference>
<dbReference type="InterPro" id="IPR001509">
    <property type="entry name" value="Epimerase_deHydtase"/>
</dbReference>
<dbReference type="InterPro" id="IPR011912">
    <property type="entry name" value="Heptose_epim"/>
</dbReference>
<dbReference type="InterPro" id="IPR036291">
    <property type="entry name" value="NAD(P)-bd_dom_sf"/>
</dbReference>
<dbReference type="NCBIfam" id="TIGR02197">
    <property type="entry name" value="heptose_epim"/>
    <property type="match status" value="1"/>
</dbReference>
<dbReference type="NCBIfam" id="NF008360">
    <property type="entry name" value="PRK11150.1"/>
    <property type="match status" value="1"/>
</dbReference>
<dbReference type="PANTHER" id="PTHR43103:SF3">
    <property type="entry name" value="ADP-L-GLYCERO-D-MANNO-HEPTOSE-6-EPIMERASE"/>
    <property type="match status" value="1"/>
</dbReference>
<dbReference type="PANTHER" id="PTHR43103">
    <property type="entry name" value="NUCLEOSIDE-DIPHOSPHATE-SUGAR EPIMERASE"/>
    <property type="match status" value="1"/>
</dbReference>
<dbReference type="Pfam" id="PF01370">
    <property type="entry name" value="Epimerase"/>
    <property type="match status" value="1"/>
</dbReference>
<dbReference type="SUPFAM" id="SSF51735">
    <property type="entry name" value="NAD(P)-binding Rossmann-fold domains"/>
    <property type="match status" value="1"/>
</dbReference>